<protein>
    <recommendedName>
        <fullName evidence="1">Small ribosomal subunit protein uS14</fullName>
    </recommendedName>
    <alternativeName>
        <fullName evidence="2">30S ribosomal protein S14</fullName>
    </alternativeName>
</protein>
<dbReference type="EMBL" id="AP009152">
    <property type="protein sequence ID" value="BAG28709.1"/>
    <property type="molecule type" value="Genomic_DNA"/>
</dbReference>
<dbReference type="RefSeq" id="WP_012397436.1">
    <property type="nucleotide sequence ID" value="NZ_VECX01000002.1"/>
</dbReference>
<dbReference type="SMR" id="B2GG86"/>
<dbReference type="STRING" id="378753.KRH_03620"/>
<dbReference type="GeneID" id="93232509"/>
<dbReference type="KEGG" id="krh:KRH_03620"/>
<dbReference type="eggNOG" id="COG0199">
    <property type="taxonomic scope" value="Bacteria"/>
</dbReference>
<dbReference type="HOGENOM" id="CLU_139869_0_1_11"/>
<dbReference type="OrthoDB" id="9810484at2"/>
<dbReference type="Proteomes" id="UP000008838">
    <property type="component" value="Chromosome"/>
</dbReference>
<dbReference type="GO" id="GO:0015935">
    <property type="term" value="C:small ribosomal subunit"/>
    <property type="evidence" value="ECO:0007669"/>
    <property type="project" value="TreeGrafter"/>
</dbReference>
<dbReference type="GO" id="GO:0019843">
    <property type="term" value="F:rRNA binding"/>
    <property type="evidence" value="ECO:0007669"/>
    <property type="project" value="UniProtKB-UniRule"/>
</dbReference>
<dbReference type="GO" id="GO:0003735">
    <property type="term" value="F:structural constituent of ribosome"/>
    <property type="evidence" value="ECO:0007669"/>
    <property type="project" value="InterPro"/>
</dbReference>
<dbReference type="GO" id="GO:0006412">
    <property type="term" value="P:translation"/>
    <property type="evidence" value="ECO:0007669"/>
    <property type="project" value="UniProtKB-UniRule"/>
</dbReference>
<dbReference type="FunFam" id="1.10.287.1480:FF:000001">
    <property type="entry name" value="30S ribosomal protein S14"/>
    <property type="match status" value="1"/>
</dbReference>
<dbReference type="Gene3D" id="1.10.287.1480">
    <property type="match status" value="1"/>
</dbReference>
<dbReference type="HAMAP" id="MF_00537">
    <property type="entry name" value="Ribosomal_uS14_1"/>
    <property type="match status" value="1"/>
</dbReference>
<dbReference type="InterPro" id="IPR001209">
    <property type="entry name" value="Ribosomal_uS14"/>
</dbReference>
<dbReference type="InterPro" id="IPR023036">
    <property type="entry name" value="Ribosomal_uS14_bac/plastid"/>
</dbReference>
<dbReference type="NCBIfam" id="NF006477">
    <property type="entry name" value="PRK08881.1"/>
    <property type="match status" value="1"/>
</dbReference>
<dbReference type="PANTHER" id="PTHR19836">
    <property type="entry name" value="30S RIBOSOMAL PROTEIN S14"/>
    <property type="match status" value="1"/>
</dbReference>
<dbReference type="PANTHER" id="PTHR19836:SF23">
    <property type="entry name" value="SMALL RIBOSOMAL SUBUNIT PROTEIN US14A"/>
    <property type="match status" value="1"/>
</dbReference>
<dbReference type="Pfam" id="PF00253">
    <property type="entry name" value="Ribosomal_S14"/>
    <property type="match status" value="1"/>
</dbReference>
<dbReference type="SUPFAM" id="SSF57716">
    <property type="entry name" value="Glucocorticoid receptor-like (DNA-binding domain)"/>
    <property type="match status" value="1"/>
</dbReference>
<feature type="chain" id="PRO_1000128427" description="Small ribosomal subunit protein uS14">
    <location>
        <begin position="1"/>
        <end position="101"/>
    </location>
</feature>
<proteinExistence type="inferred from homology"/>
<keyword id="KW-1185">Reference proteome</keyword>
<keyword id="KW-0687">Ribonucleoprotein</keyword>
<keyword id="KW-0689">Ribosomal protein</keyword>
<keyword id="KW-0694">RNA-binding</keyword>
<keyword id="KW-0699">rRNA-binding</keyword>
<name>RS14_KOCRD</name>
<accession>B2GG86</accession>
<evidence type="ECO:0000255" key="1">
    <source>
        <dbReference type="HAMAP-Rule" id="MF_00537"/>
    </source>
</evidence>
<evidence type="ECO:0000305" key="2"/>
<comment type="function">
    <text evidence="1">Binds 16S rRNA, required for the assembly of 30S particles and may also be responsible for determining the conformation of the 16S rRNA at the A site.</text>
</comment>
<comment type="subunit">
    <text evidence="1">Part of the 30S ribosomal subunit. Contacts proteins S3 and S10.</text>
</comment>
<comment type="similarity">
    <text evidence="1">Belongs to the universal ribosomal protein uS14 family.</text>
</comment>
<gene>
    <name evidence="1" type="primary">rpsN</name>
    <name type="ordered locus">KRH_03620</name>
</gene>
<organism>
    <name type="scientific">Kocuria rhizophila (strain ATCC 9341 / DSM 348 / NBRC 103217 / DC2201)</name>
    <dbReference type="NCBI Taxonomy" id="378753"/>
    <lineage>
        <taxon>Bacteria</taxon>
        <taxon>Bacillati</taxon>
        <taxon>Actinomycetota</taxon>
        <taxon>Actinomycetes</taxon>
        <taxon>Micrococcales</taxon>
        <taxon>Micrococcaceae</taxon>
        <taxon>Kocuria</taxon>
    </lineage>
</organism>
<sequence length="101" mass="11733">MAKKSKIAKNEQRKVIVERYAAKRAELKKTLVDENASPEAREEARLGLQKLPRDASPIRVRNRDQIDGRPRGTFQRFGISRVRFRDMAHRGELPGIYKSSW</sequence>
<reference key="1">
    <citation type="journal article" date="2008" name="J. Bacteriol.">
        <title>Complete genome sequence of the soil actinomycete Kocuria rhizophila.</title>
        <authorList>
            <person name="Takarada H."/>
            <person name="Sekine M."/>
            <person name="Kosugi H."/>
            <person name="Matsuo Y."/>
            <person name="Fujisawa T."/>
            <person name="Omata S."/>
            <person name="Kishi E."/>
            <person name="Shimizu A."/>
            <person name="Tsukatani N."/>
            <person name="Tanikawa S."/>
            <person name="Fujita N."/>
            <person name="Harayama S."/>
        </authorList>
    </citation>
    <scope>NUCLEOTIDE SEQUENCE [LARGE SCALE GENOMIC DNA]</scope>
    <source>
        <strain>ATCC 9341 / DSM 348 / NBRC 103217 / DC2201</strain>
    </source>
</reference>